<accession>Q5WHR6</accession>
<reference key="1">
    <citation type="submission" date="2003-10" db="EMBL/GenBank/DDBJ databases">
        <title>The complete genome sequence of the alkaliphilic Bacillus clausii KSM-K16.</title>
        <authorList>
            <person name="Takaki Y."/>
            <person name="Kageyama Y."/>
            <person name="Shimamura S."/>
            <person name="Suzuki H."/>
            <person name="Nishi S."/>
            <person name="Hatada Y."/>
            <person name="Kawai S."/>
            <person name="Ito S."/>
            <person name="Horikoshi K."/>
        </authorList>
    </citation>
    <scope>NUCLEOTIDE SEQUENCE [LARGE SCALE GENOMIC DNA]</scope>
    <source>
        <strain>KSM-K16</strain>
    </source>
</reference>
<sequence>MIDYIKGNLVAVEPAYLVVEANGIGFQIYCANPYRFINDLNREVVVPTHHYVREDSQRLFGFTTRTERLLFEKLLNVSGIGPKGALAILASGEPEDIIHAIEQEDEALLVRFPGVGKKTARQIILDLKGKLDDMAPMLEPAAGADKQQKNPQLEDALEALRALGYVEKELKKVEKQLKAETLETDEYIRRALALMLKRP</sequence>
<name>RUVA_SHOC1</name>
<organism>
    <name type="scientific">Shouchella clausii (strain KSM-K16)</name>
    <name type="common">Alkalihalobacillus clausii</name>
    <dbReference type="NCBI Taxonomy" id="66692"/>
    <lineage>
        <taxon>Bacteria</taxon>
        <taxon>Bacillati</taxon>
        <taxon>Bacillota</taxon>
        <taxon>Bacilli</taxon>
        <taxon>Bacillales</taxon>
        <taxon>Bacillaceae</taxon>
        <taxon>Shouchella</taxon>
    </lineage>
</organism>
<evidence type="ECO:0000255" key="1">
    <source>
        <dbReference type="HAMAP-Rule" id="MF_00031"/>
    </source>
</evidence>
<keyword id="KW-0963">Cytoplasm</keyword>
<keyword id="KW-0227">DNA damage</keyword>
<keyword id="KW-0233">DNA recombination</keyword>
<keyword id="KW-0234">DNA repair</keyword>
<keyword id="KW-0238">DNA-binding</keyword>
<keyword id="KW-1185">Reference proteome</keyword>
<protein>
    <recommendedName>
        <fullName evidence="1">Holliday junction branch migration complex subunit RuvA</fullName>
    </recommendedName>
</protein>
<comment type="function">
    <text evidence="1">The RuvA-RuvB-RuvC complex processes Holliday junction (HJ) DNA during genetic recombination and DNA repair, while the RuvA-RuvB complex plays an important role in the rescue of blocked DNA replication forks via replication fork reversal (RFR). RuvA specifically binds to HJ cruciform DNA, conferring on it an open structure. The RuvB hexamer acts as an ATP-dependent pump, pulling dsDNA into and through the RuvAB complex. HJ branch migration allows RuvC to scan DNA until it finds its consensus sequence, where it cleaves and resolves the cruciform DNA.</text>
</comment>
<comment type="subunit">
    <text evidence="1">Homotetramer. Forms an RuvA(8)-RuvB(12)-Holliday junction (HJ) complex. HJ DNA is sandwiched between 2 RuvA tetramers; dsDNA enters through RuvA and exits via RuvB. An RuvB hexamer assembles on each DNA strand where it exits the tetramer. Each RuvB hexamer is contacted by two RuvA subunits (via domain III) on 2 adjacent RuvB subunits; this complex drives branch migration. In the full resolvosome a probable DNA-RuvA(4)-RuvB(12)-RuvC(2) complex forms which resolves the HJ.</text>
</comment>
<comment type="subcellular location">
    <subcellularLocation>
        <location evidence="1">Cytoplasm</location>
    </subcellularLocation>
</comment>
<comment type="domain">
    <text evidence="1">Has three domains with a flexible linker between the domains II and III and assumes an 'L' shape. Domain III is highly mobile and contacts RuvB.</text>
</comment>
<comment type="similarity">
    <text evidence="1">Belongs to the RuvA family.</text>
</comment>
<feature type="chain" id="PRO_0000224839" description="Holliday junction branch migration complex subunit RuvA">
    <location>
        <begin position="1"/>
        <end position="199"/>
    </location>
</feature>
<feature type="region of interest" description="Domain I" evidence="1">
    <location>
        <begin position="1"/>
        <end position="63"/>
    </location>
</feature>
<feature type="region of interest" description="Domain II" evidence="1">
    <location>
        <begin position="64"/>
        <end position="142"/>
    </location>
</feature>
<feature type="region of interest" description="Flexible linker" evidence="1">
    <location>
        <begin position="143"/>
        <end position="153"/>
    </location>
</feature>
<feature type="region of interest" description="Domain III" evidence="1">
    <location>
        <begin position="153"/>
        <end position="199"/>
    </location>
</feature>
<dbReference type="EMBL" id="AP006627">
    <property type="protein sequence ID" value="BAD64089.1"/>
    <property type="molecule type" value="Genomic_DNA"/>
</dbReference>
<dbReference type="RefSeq" id="WP_011246398.1">
    <property type="nucleotide sequence ID" value="NC_006582.1"/>
</dbReference>
<dbReference type="SMR" id="Q5WHR6"/>
<dbReference type="STRING" id="66692.ABC1554"/>
<dbReference type="KEGG" id="bcl:ABC1554"/>
<dbReference type="eggNOG" id="COG0632">
    <property type="taxonomic scope" value="Bacteria"/>
</dbReference>
<dbReference type="HOGENOM" id="CLU_087936_1_0_9"/>
<dbReference type="OrthoDB" id="5293449at2"/>
<dbReference type="Proteomes" id="UP000001168">
    <property type="component" value="Chromosome"/>
</dbReference>
<dbReference type="GO" id="GO:0005737">
    <property type="term" value="C:cytoplasm"/>
    <property type="evidence" value="ECO:0007669"/>
    <property type="project" value="UniProtKB-SubCell"/>
</dbReference>
<dbReference type="GO" id="GO:0009379">
    <property type="term" value="C:Holliday junction helicase complex"/>
    <property type="evidence" value="ECO:0007669"/>
    <property type="project" value="InterPro"/>
</dbReference>
<dbReference type="GO" id="GO:0048476">
    <property type="term" value="C:Holliday junction resolvase complex"/>
    <property type="evidence" value="ECO:0007669"/>
    <property type="project" value="UniProtKB-UniRule"/>
</dbReference>
<dbReference type="GO" id="GO:0005524">
    <property type="term" value="F:ATP binding"/>
    <property type="evidence" value="ECO:0007669"/>
    <property type="project" value="InterPro"/>
</dbReference>
<dbReference type="GO" id="GO:0000400">
    <property type="term" value="F:four-way junction DNA binding"/>
    <property type="evidence" value="ECO:0007669"/>
    <property type="project" value="UniProtKB-UniRule"/>
</dbReference>
<dbReference type="GO" id="GO:0009378">
    <property type="term" value="F:four-way junction helicase activity"/>
    <property type="evidence" value="ECO:0007669"/>
    <property type="project" value="InterPro"/>
</dbReference>
<dbReference type="GO" id="GO:0006310">
    <property type="term" value="P:DNA recombination"/>
    <property type="evidence" value="ECO:0007669"/>
    <property type="project" value="UniProtKB-UniRule"/>
</dbReference>
<dbReference type="GO" id="GO:0006281">
    <property type="term" value="P:DNA repair"/>
    <property type="evidence" value="ECO:0007669"/>
    <property type="project" value="UniProtKB-UniRule"/>
</dbReference>
<dbReference type="CDD" id="cd14332">
    <property type="entry name" value="UBA_RuvA_C"/>
    <property type="match status" value="1"/>
</dbReference>
<dbReference type="Gene3D" id="1.10.150.20">
    <property type="entry name" value="5' to 3' exonuclease, C-terminal subdomain"/>
    <property type="match status" value="1"/>
</dbReference>
<dbReference type="Gene3D" id="1.10.8.10">
    <property type="entry name" value="DNA helicase RuvA subunit, C-terminal domain"/>
    <property type="match status" value="1"/>
</dbReference>
<dbReference type="Gene3D" id="2.40.50.140">
    <property type="entry name" value="Nucleic acid-binding proteins"/>
    <property type="match status" value="1"/>
</dbReference>
<dbReference type="HAMAP" id="MF_00031">
    <property type="entry name" value="DNA_HJ_migration_RuvA"/>
    <property type="match status" value="1"/>
</dbReference>
<dbReference type="InterPro" id="IPR013849">
    <property type="entry name" value="DNA_helicase_Holl-junc_RuvA_I"/>
</dbReference>
<dbReference type="InterPro" id="IPR003583">
    <property type="entry name" value="Hlx-hairpin-Hlx_DNA-bd_motif"/>
</dbReference>
<dbReference type="InterPro" id="IPR012340">
    <property type="entry name" value="NA-bd_OB-fold"/>
</dbReference>
<dbReference type="InterPro" id="IPR000085">
    <property type="entry name" value="RuvA"/>
</dbReference>
<dbReference type="InterPro" id="IPR010994">
    <property type="entry name" value="RuvA_2-like"/>
</dbReference>
<dbReference type="InterPro" id="IPR011114">
    <property type="entry name" value="RuvA_C"/>
</dbReference>
<dbReference type="InterPro" id="IPR036267">
    <property type="entry name" value="RuvA_C_sf"/>
</dbReference>
<dbReference type="NCBIfam" id="TIGR00084">
    <property type="entry name" value="ruvA"/>
    <property type="match status" value="1"/>
</dbReference>
<dbReference type="Pfam" id="PF14520">
    <property type="entry name" value="HHH_5"/>
    <property type="match status" value="1"/>
</dbReference>
<dbReference type="Pfam" id="PF07499">
    <property type="entry name" value="RuvA_C"/>
    <property type="match status" value="1"/>
</dbReference>
<dbReference type="Pfam" id="PF01330">
    <property type="entry name" value="RuvA_N"/>
    <property type="match status" value="1"/>
</dbReference>
<dbReference type="SMART" id="SM00278">
    <property type="entry name" value="HhH1"/>
    <property type="match status" value="2"/>
</dbReference>
<dbReference type="SUPFAM" id="SSF46929">
    <property type="entry name" value="DNA helicase RuvA subunit, C-terminal domain"/>
    <property type="match status" value="1"/>
</dbReference>
<dbReference type="SUPFAM" id="SSF50249">
    <property type="entry name" value="Nucleic acid-binding proteins"/>
    <property type="match status" value="1"/>
</dbReference>
<dbReference type="SUPFAM" id="SSF47781">
    <property type="entry name" value="RuvA domain 2-like"/>
    <property type="match status" value="1"/>
</dbReference>
<gene>
    <name evidence="1" type="primary">ruvA</name>
    <name type="ordered locus">ABC1554</name>
</gene>
<proteinExistence type="inferred from homology"/>